<proteinExistence type="inferred from homology"/>
<dbReference type="EMBL" id="CP001291">
    <property type="protein sequence ID" value="ACK72084.1"/>
    <property type="molecule type" value="Genomic_DNA"/>
</dbReference>
<dbReference type="RefSeq" id="WP_015955677.1">
    <property type="nucleotide sequence ID" value="NC_011729.1"/>
</dbReference>
<dbReference type="SMR" id="B7KHY7"/>
<dbReference type="STRING" id="65393.PCC7424_3703"/>
<dbReference type="KEGG" id="cyc:PCC7424_3703"/>
<dbReference type="eggNOG" id="COG0087">
    <property type="taxonomic scope" value="Bacteria"/>
</dbReference>
<dbReference type="HOGENOM" id="CLU_044142_4_1_3"/>
<dbReference type="OrthoDB" id="9806135at2"/>
<dbReference type="Proteomes" id="UP000002384">
    <property type="component" value="Chromosome"/>
</dbReference>
<dbReference type="GO" id="GO:0022625">
    <property type="term" value="C:cytosolic large ribosomal subunit"/>
    <property type="evidence" value="ECO:0007669"/>
    <property type="project" value="TreeGrafter"/>
</dbReference>
<dbReference type="GO" id="GO:0019843">
    <property type="term" value="F:rRNA binding"/>
    <property type="evidence" value="ECO:0007669"/>
    <property type="project" value="UniProtKB-UniRule"/>
</dbReference>
<dbReference type="GO" id="GO:0003735">
    <property type="term" value="F:structural constituent of ribosome"/>
    <property type="evidence" value="ECO:0007669"/>
    <property type="project" value="InterPro"/>
</dbReference>
<dbReference type="GO" id="GO:0006412">
    <property type="term" value="P:translation"/>
    <property type="evidence" value="ECO:0007669"/>
    <property type="project" value="UniProtKB-UniRule"/>
</dbReference>
<dbReference type="FunFam" id="3.30.160.810:FF:000001">
    <property type="entry name" value="50S ribosomal protein L3"/>
    <property type="match status" value="1"/>
</dbReference>
<dbReference type="FunFam" id="2.40.30.10:FF:000065">
    <property type="entry name" value="50S ribosomal protein L3, chloroplastic"/>
    <property type="match status" value="1"/>
</dbReference>
<dbReference type="Gene3D" id="3.30.160.810">
    <property type="match status" value="1"/>
</dbReference>
<dbReference type="Gene3D" id="2.40.30.10">
    <property type="entry name" value="Translation factors"/>
    <property type="match status" value="1"/>
</dbReference>
<dbReference type="HAMAP" id="MF_01325_B">
    <property type="entry name" value="Ribosomal_uL3_B"/>
    <property type="match status" value="1"/>
</dbReference>
<dbReference type="InterPro" id="IPR000597">
    <property type="entry name" value="Ribosomal_uL3"/>
</dbReference>
<dbReference type="InterPro" id="IPR019927">
    <property type="entry name" value="Ribosomal_uL3_bac/org-type"/>
</dbReference>
<dbReference type="InterPro" id="IPR019926">
    <property type="entry name" value="Ribosomal_uL3_CS"/>
</dbReference>
<dbReference type="InterPro" id="IPR009000">
    <property type="entry name" value="Transl_B-barrel_sf"/>
</dbReference>
<dbReference type="NCBIfam" id="TIGR03625">
    <property type="entry name" value="L3_bact"/>
    <property type="match status" value="1"/>
</dbReference>
<dbReference type="PANTHER" id="PTHR11229">
    <property type="entry name" value="50S RIBOSOMAL PROTEIN L3"/>
    <property type="match status" value="1"/>
</dbReference>
<dbReference type="PANTHER" id="PTHR11229:SF16">
    <property type="entry name" value="LARGE RIBOSOMAL SUBUNIT PROTEIN UL3C"/>
    <property type="match status" value="1"/>
</dbReference>
<dbReference type="Pfam" id="PF00297">
    <property type="entry name" value="Ribosomal_L3"/>
    <property type="match status" value="1"/>
</dbReference>
<dbReference type="SUPFAM" id="SSF50447">
    <property type="entry name" value="Translation proteins"/>
    <property type="match status" value="1"/>
</dbReference>
<dbReference type="PROSITE" id="PS00474">
    <property type="entry name" value="RIBOSOMAL_L3"/>
    <property type="match status" value="1"/>
</dbReference>
<keyword id="KW-1185">Reference proteome</keyword>
<keyword id="KW-0687">Ribonucleoprotein</keyword>
<keyword id="KW-0689">Ribosomal protein</keyword>
<keyword id="KW-0694">RNA-binding</keyword>
<keyword id="KW-0699">rRNA-binding</keyword>
<name>RL3_GLOC7</name>
<protein>
    <recommendedName>
        <fullName evidence="1">Large ribosomal subunit protein uL3</fullName>
    </recommendedName>
    <alternativeName>
        <fullName evidence="3">50S ribosomal protein L3</fullName>
    </alternativeName>
</protein>
<organism>
    <name type="scientific">Gloeothece citriformis (strain PCC 7424)</name>
    <name type="common">Cyanothece sp. (strain PCC 7424)</name>
    <dbReference type="NCBI Taxonomy" id="65393"/>
    <lineage>
        <taxon>Bacteria</taxon>
        <taxon>Bacillati</taxon>
        <taxon>Cyanobacteriota</taxon>
        <taxon>Cyanophyceae</taxon>
        <taxon>Oscillatoriophycideae</taxon>
        <taxon>Chroococcales</taxon>
        <taxon>Aphanothecaceae</taxon>
        <taxon>Gloeothece</taxon>
        <taxon>Gloeothece citriformis</taxon>
    </lineage>
</organism>
<gene>
    <name evidence="1" type="primary">rplC</name>
    <name evidence="1" type="synonym">rpl3</name>
    <name type="ordered locus">PCC7424_3703</name>
</gene>
<sequence>MSVGILGTKLGMTQIFDKETGIAIPVTVIHAGPCPITQVKTPATDGYNSIQIGYGEVKEKALNKPKLGHLKKSASTPVRHLKEYRLENAADYQLGDGIKVDLFKPGDLVDVAGKTIGRGFAGYQKRHNFKRGSMTHGSKNHRLPGSTGAGTTPGRVYPGKRMAGRYGGTQVTIRKLTVVQIDTERNLILIKGAVPGKPGNLLSITPAKTVGK</sequence>
<evidence type="ECO:0000255" key="1">
    <source>
        <dbReference type="HAMAP-Rule" id="MF_01325"/>
    </source>
</evidence>
<evidence type="ECO:0000256" key="2">
    <source>
        <dbReference type="SAM" id="MobiDB-lite"/>
    </source>
</evidence>
<evidence type="ECO:0000305" key="3"/>
<accession>B7KHY7</accession>
<reference key="1">
    <citation type="journal article" date="2011" name="MBio">
        <title>Novel metabolic attributes of the genus Cyanothece, comprising a group of unicellular nitrogen-fixing Cyanobacteria.</title>
        <authorList>
            <person name="Bandyopadhyay A."/>
            <person name="Elvitigala T."/>
            <person name="Welsh E."/>
            <person name="Stockel J."/>
            <person name="Liberton M."/>
            <person name="Min H."/>
            <person name="Sherman L.A."/>
            <person name="Pakrasi H.B."/>
        </authorList>
    </citation>
    <scope>NUCLEOTIDE SEQUENCE [LARGE SCALE GENOMIC DNA]</scope>
    <source>
        <strain>PCC 7424</strain>
    </source>
</reference>
<feature type="chain" id="PRO_1000141852" description="Large ribosomal subunit protein uL3">
    <location>
        <begin position="1"/>
        <end position="212"/>
    </location>
</feature>
<feature type="region of interest" description="Disordered" evidence="2">
    <location>
        <begin position="130"/>
        <end position="158"/>
    </location>
</feature>
<comment type="function">
    <text evidence="1">One of the primary rRNA binding proteins, it binds directly near the 3'-end of the 23S rRNA, where it nucleates assembly of the 50S subunit.</text>
</comment>
<comment type="subunit">
    <text evidence="1">Part of the 50S ribosomal subunit. Forms a cluster with proteins L14 and L19.</text>
</comment>
<comment type="similarity">
    <text evidence="1">Belongs to the universal ribosomal protein uL3 family.</text>
</comment>